<comment type="catalytic activity">
    <reaction>
        <text>L-serine + acetyl-CoA = O-acetyl-L-serine + CoA</text>
        <dbReference type="Rhea" id="RHEA:24560"/>
        <dbReference type="ChEBI" id="CHEBI:33384"/>
        <dbReference type="ChEBI" id="CHEBI:57287"/>
        <dbReference type="ChEBI" id="CHEBI:57288"/>
        <dbReference type="ChEBI" id="CHEBI:58340"/>
        <dbReference type="EC" id="2.3.1.30"/>
    </reaction>
</comment>
<comment type="pathway">
    <text>Amino-acid biosynthesis; L-cysteine biosynthesis; L-cysteine from L-serine: step 1/2.</text>
</comment>
<comment type="subcellular location">
    <subcellularLocation>
        <location>Cytoplasm</location>
    </subcellularLocation>
</comment>
<comment type="similarity">
    <text evidence="1">Belongs to the transferase hexapeptide repeat family.</text>
</comment>
<keyword id="KW-0012">Acyltransferase</keyword>
<keyword id="KW-0028">Amino-acid biosynthesis</keyword>
<keyword id="KW-0198">Cysteine biosynthesis</keyword>
<keyword id="KW-0963">Cytoplasm</keyword>
<keyword id="KW-0677">Repeat</keyword>
<keyword id="KW-0808">Transferase</keyword>
<accession>Q8CTU2</accession>
<feature type="chain" id="PRO_0000068683" description="Serine acetyltransferase">
    <location>
        <begin position="1"/>
        <end position="213"/>
    </location>
</feature>
<name>CYSE_STAES</name>
<organism>
    <name type="scientific">Staphylococcus epidermidis (strain ATCC 12228 / FDA PCI 1200)</name>
    <dbReference type="NCBI Taxonomy" id="176280"/>
    <lineage>
        <taxon>Bacteria</taxon>
        <taxon>Bacillati</taxon>
        <taxon>Bacillota</taxon>
        <taxon>Bacilli</taxon>
        <taxon>Bacillales</taxon>
        <taxon>Staphylococcaceae</taxon>
        <taxon>Staphylococcus</taxon>
    </lineage>
</organism>
<dbReference type="EC" id="2.3.1.30"/>
<dbReference type="EMBL" id="AE015929">
    <property type="protein sequence ID" value="AAO03888.1"/>
    <property type="molecule type" value="Genomic_DNA"/>
</dbReference>
<dbReference type="RefSeq" id="NP_763846.1">
    <property type="nucleotide sequence ID" value="NC_004461.1"/>
</dbReference>
<dbReference type="SMR" id="Q8CTU2"/>
<dbReference type="KEGG" id="sep:SE_0291"/>
<dbReference type="PATRIC" id="fig|176280.10.peg.267"/>
<dbReference type="eggNOG" id="COG1045">
    <property type="taxonomic scope" value="Bacteria"/>
</dbReference>
<dbReference type="HOGENOM" id="CLU_051638_10_0_9"/>
<dbReference type="OrthoDB" id="9801456at2"/>
<dbReference type="UniPathway" id="UPA00136">
    <property type="reaction ID" value="UER00199"/>
</dbReference>
<dbReference type="Proteomes" id="UP000001411">
    <property type="component" value="Chromosome"/>
</dbReference>
<dbReference type="GO" id="GO:0005737">
    <property type="term" value="C:cytoplasm"/>
    <property type="evidence" value="ECO:0007669"/>
    <property type="project" value="UniProtKB-SubCell"/>
</dbReference>
<dbReference type="GO" id="GO:0009001">
    <property type="term" value="F:serine O-acetyltransferase activity"/>
    <property type="evidence" value="ECO:0007669"/>
    <property type="project" value="UniProtKB-EC"/>
</dbReference>
<dbReference type="GO" id="GO:0006535">
    <property type="term" value="P:cysteine biosynthetic process from serine"/>
    <property type="evidence" value="ECO:0007669"/>
    <property type="project" value="InterPro"/>
</dbReference>
<dbReference type="CDD" id="cd03354">
    <property type="entry name" value="LbH_SAT"/>
    <property type="match status" value="1"/>
</dbReference>
<dbReference type="FunFam" id="1.10.3130.10:FF:000002">
    <property type="entry name" value="Serine acetyltransferase"/>
    <property type="match status" value="1"/>
</dbReference>
<dbReference type="FunFam" id="2.160.10.10:FF:000007">
    <property type="entry name" value="Serine acetyltransferase"/>
    <property type="match status" value="1"/>
</dbReference>
<dbReference type="Gene3D" id="2.160.10.10">
    <property type="entry name" value="Hexapeptide repeat proteins"/>
    <property type="match status" value="1"/>
</dbReference>
<dbReference type="Gene3D" id="1.10.3130.10">
    <property type="entry name" value="serine acetyltransferase, domain 1"/>
    <property type="match status" value="1"/>
</dbReference>
<dbReference type="InterPro" id="IPR001451">
    <property type="entry name" value="Hexapep"/>
</dbReference>
<dbReference type="InterPro" id="IPR018357">
    <property type="entry name" value="Hexapep_transf_CS"/>
</dbReference>
<dbReference type="InterPro" id="IPR045304">
    <property type="entry name" value="LbH_SAT"/>
</dbReference>
<dbReference type="InterPro" id="IPR042122">
    <property type="entry name" value="Ser_AcTrfase_N_sf"/>
</dbReference>
<dbReference type="InterPro" id="IPR005881">
    <property type="entry name" value="Ser_O-AcTrfase"/>
</dbReference>
<dbReference type="InterPro" id="IPR053376">
    <property type="entry name" value="Serine_acetyltransferase"/>
</dbReference>
<dbReference type="InterPro" id="IPR011004">
    <property type="entry name" value="Trimer_LpxA-like_sf"/>
</dbReference>
<dbReference type="NCBIfam" id="TIGR01172">
    <property type="entry name" value="cysE"/>
    <property type="match status" value="1"/>
</dbReference>
<dbReference type="NCBIfam" id="NF041874">
    <property type="entry name" value="EPS_EpsC"/>
    <property type="match status" value="1"/>
</dbReference>
<dbReference type="PANTHER" id="PTHR42811">
    <property type="entry name" value="SERINE ACETYLTRANSFERASE"/>
    <property type="match status" value="1"/>
</dbReference>
<dbReference type="Pfam" id="PF00132">
    <property type="entry name" value="Hexapep"/>
    <property type="match status" value="1"/>
</dbReference>
<dbReference type="Pfam" id="PF14602">
    <property type="entry name" value="Hexapep_2"/>
    <property type="match status" value="1"/>
</dbReference>
<dbReference type="PIRSF" id="PIRSF000441">
    <property type="entry name" value="CysE"/>
    <property type="match status" value="1"/>
</dbReference>
<dbReference type="SUPFAM" id="SSF51161">
    <property type="entry name" value="Trimeric LpxA-like enzymes"/>
    <property type="match status" value="1"/>
</dbReference>
<dbReference type="PROSITE" id="PS00101">
    <property type="entry name" value="HEXAPEP_TRANSFERASES"/>
    <property type="match status" value="1"/>
</dbReference>
<sequence length="213" mass="23679">MLKRMRDDIKMVFEQDPAARSTLEVITTYAGLHAVWSHLIAHKLYKNRRYVAARMISQLSRFFTGIEIHPGAKIGKRLFIDHGMGVVIGETCTIGDNVTIYQGVTLGGTGKEKGKRHPDIGDNVLIAAGSKILGNIKIESNVNIGANSVVLQSVPSYTTVVGIPGHIVKQEGRRIGKTFDHRNLPDPLYEQIKHLERQLEKAKNGEIQDDYII</sequence>
<gene>
    <name type="primary">cysE</name>
    <name type="ordered locus">SE_0291</name>
</gene>
<proteinExistence type="inferred from homology"/>
<reference key="1">
    <citation type="journal article" date="2003" name="Mol. Microbiol.">
        <title>Genome-based analysis of virulence genes in a non-biofilm-forming Staphylococcus epidermidis strain (ATCC 12228).</title>
        <authorList>
            <person name="Zhang Y.-Q."/>
            <person name="Ren S.-X."/>
            <person name="Li H.-L."/>
            <person name="Wang Y.-X."/>
            <person name="Fu G."/>
            <person name="Yang J."/>
            <person name="Qin Z.-Q."/>
            <person name="Miao Y.-G."/>
            <person name="Wang W.-Y."/>
            <person name="Chen R.-S."/>
            <person name="Shen Y."/>
            <person name="Chen Z."/>
            <person name="Yuan Z.-H."/>
            <person name="Zhao G.-P."/>
            <person name="Qu D."/>
            <person name="Danchin A."/>
            <person name="Wen Y.-M."/>
        </authorList>
    </citation>
    <scope>NUCLEOTIDE SEQUENCE [LARGE SCALE GENOMIC DNA]</scope>
    <source>
        <strain>ATCC 12228 / FDA PCI 1200</strain>
    </source>
</reference>
<protein>
    <recommendedName>
        <fullName>Serine acetyltransferase</fullName>
        <shortName>SAT</shortName>
        <ecNumber>2.3.1.30</ecNumber>
    </recommendedName>
</protein>
<evidence type="ECO:0000305" key="1"/>